<sequence length="252" mass="28682">MGQKVHPTGFRLGIIKDWTSRWYDDGPVIAEKIKQDQVIRNYVNTRLKKERAGVARIVIERTTKHIKINIFAARPGAVVGRKGEEINNLSQELNRITGKEVKIDVVEVVKPEVEAQLIGENIAYQLENRVSFRRAMKQAIQQAMRAGAEGIRIRCAGRLGGVEIARSEQYKEGKIPLHTIRANVDYASVTAHTIAGAIGIKVWVYKGEVLVQRIDAVEEEEMKKIRDRRNDQRSRGGRDSRNKRRRRPKNTA</sequence>
<protein>
    <recommendedName>
        <fullName evidence="1">Small ribosomal subunit protein uS3</fullName>
    </recommendedName>
    <alternativeName>
        <fullName evidence="3">30S ribosomal protein S3</fullName>
    </alternativeName>
</protein>
<keyword id="KW-0687">Ribonucleoprotein</keyword>
<keyword id="KW-0689">Ribosomal protein</keyword>
<keyword id="KW-0694">RNA-binding</keyword>
<keyword id="KW-0699">rRNA-binding</keyword>
<accession>B3EP55</accession>
<organism>
    <name type="scientific">Chlorobium phaeobacteroides (strain BS1)</name>
    <dbReference type="NCBI Taxonomy" id="331678"/>
    <lineage>
        <taxon>Bacteria</taxon>
        <taxon>Pseudomonadati</taxon>
        <taxon>Chlorobiota</taxon>
        <taxon>Chlorobiia</taxon>
        <taxon>Chlorobiales</taxon>
        <taxon>Chlorobiaceae</taxon>
        <taxon>Chlorobium/Pelodictyon group</taxon>
        <taxon>Chlorobium</taxon>
    </lineage>
</organism>
<comment type="function">
    <text evidence="1">Binds the lower part of the 30S subunit head. Binds mRNA in the 70S ribosome, positioning it for translation.</text>
</comment>
<comment type="subunit">
    <text evidence="1">Part of the 30S ribosomal subunit. Forms a tight complex with proteins S10 and S14.</text>
</comment>
<comment type="similarity">
    <text evidence="1">Belongs to the universal ribosomal protein uS3 family.</text>
</comment>
<feature type="chain" id="PRO_1000140938" description="Small ribosomal subunit protein uS3">
    <location>
        <begin position="1"/>
        <end position="252"/>
    </location>
</feature>
<feature type="domain" description="KH type-2" evidence="1">
    <location>
        <begin position="39"/>
        <end position="109"/>
    </location>
</feature>
<feature type="region of interest" description="Disordered" evidence="2">
    <location>
        <begin position="222"/>
        <end position="252"/>
    </location>
</feature>
<feature type="compositionally biased region" description="Basic and acidic residues" evidence="2">
    <location>
        <begin position="222"/>
        <end position="240"/>
    </location>
</feature>
<feature type="compositionally biased region" description="Basic residues" evidence="2">
    <location>
        <begin position="241"/>
        <end position="252"/>
    </location>
</feature>
<proteinExistence type="inferred from homology"/>
<gene>
    <name evidence="1" type="primary">rpsC</name>
    <name type="ordered locus">Cphamn1_2290</name>
</gene>
<evidence type="ECO:0000255" key="1">
    <source>
        <dbReference type="HAMAP-Rule" id="MF_01309"/>
    </source>
</evidence>
<evidence type="ECO:0000256" key="2">
    <source>
        <dbReference type="SAM" id="MobiDB-lite"/>
    </source>
</evidence>
<evidence type="ECO:0000305" key="3"/>
<dbReference type="EMBL" id="CP001101">
    <property type="protein sequence ID" value="ACE05194.1"/>
    <property type="molecule type" value="Genomic_DNA"/>
</dbReference>
<dbReference type="SMR" id="B3EP55"/>
<dbReference type="STRING" id="331678.Cphamn1_2290"/>
<dbReference type="KEGG" id="cpb:Cphamn1_2290"/>
<dbReference type="eggNOG" id="COG0092">
    <property type="taxonomic scope" value="Bacteria"/>
</dbReference>
<dbReference type="HOGENOM" id="CLU_058591_0_2_10"/>
<dbReference type="OrthoDB" id="9806396at2"/>
<dbReference type="GO" id="GO:0022627">
    <property type="term" value="C:cytosolic small ribosomal subunit"/>
    <property type="evidence" value="ECO:0007669"/>
    <property type="project" value="TreeGrafter"/>
</dbReference>
<dbReference type="GO" id="GO:0003729">
    <property type="term" value="F:mRNA binding"/>
    <property type="evidence" value="ECO:0007669"/>
    <property type="project" value="UniProtKB-UniRule"/>
</dbReference>
<dbReference type="GO" id="GO:0019843">
    <property type="term" value="F:rRNA binding"/>
    <property type="evidence" value="ECO:0007669"/>
    <property type="project" value="UniProtKB-UniRule"/>
</dbReference>
<dbReference type="GO" id="GO:0003735">
    <property type="term" value="F:structural constituent of ribosome"/>
    <property type="evidence" value="ECO:0007669"/>
    <property type="project" value="InterPro"/>
</dbReference>
<dbReference type="GO" id="GO:0006412">
    <property type="term" value="P:translation"/>
    <property type="evidence" value="ECO:0007669"/>
    <property type="project" value="UniProtKB-UniRule"/>
</dbReference>
<dbReference type="CDD" id="cd02412">
    <property type="entry name" value="KH-II_30S_S3"/>
    <property type="match status" value="1"/>
</dbReference>
<dbReference type="FunFam" id="3.30.300.20:FF:000001">
    <property type="entry name" value="30S ribosomal protein S3"/>
    <property type="match status" value="1"/>
</dbReference>
<dbReference type="Gene3D" id="3.30.300.20">
    <property type="match status" value="1"/>
</dbReference>
<dbReference type="Gene3D" id="3.30.1140.32">
    <property type="entry name" value="Ribosomal protein S3, C-terminal domain"/>
    <property type="match status" value="1"/>
</dbReference>
<dbReference type="HAMAP" id="MF_01309_B">
    <property type="entry name" value="Ribosomal_uS3_B"/>
    <property type="match status" value="1"/>
</dbReference>
<dbReference type="InterPro" id="IPR004087">
    <property type="entry name" value="KH_dom"/>
</dbReference>
<dbReference type="InterPro" id="IPR015946">
    <property type="entry name" value="KH_dom-like_a/b"/>
</dbReference>
<dbReference type="InterPro" id="IPR004044">
    <property type="entry name" value="KH_dom_type_2"/>
</dbReference>
<dbReference type="InterPro" id="IPR009019">
    <property type="entry name" value="KH_sf_prok-type"/>
</dbReference>
<dbReference type="InterPro" id="IPR036419">
    <property type="entry name" value="Ribosomal_S3_C_sf"/>
</dbReference>
<dbReference type="InterPro" id="IPR005704">
    <property type="entry name" value="Ribosomal_uS3_bac-typ"/>
</dbReference>
<dbReference type="InterPro" id="IPR001351">
    <property type="entry name" value="Ribosomal_uS3_C"/>
</dbReference>
<dbReference type="InterPro" id="IPR018280">
    <property type="entry name" value="Ribosomal_uS3_CS"/>
</dbReference>
<dbReference type="NCBIfam" id="TIGR01009">
    <property type="entry name" value="rpsC_bact"/>
    <property type="match status" value="1"/>
</dbReference>
<dbReference type="PANTHER" id="PTHR11760">
    <property type="entry name" value="30S/40S RIBOSOMAL PROTEIN S3"/>
    <property type="match status" value="1"/>
</dbReference>
<dbReference type="PANTHER" id="PTHR11760:SF19">
    <property type="entry name" value="SMALL RIBOSOMAL SUBUNIT PROTEIN US3C"/>
    <property type="match status" value="1"/>
</dbReference>
<dbReference type="Pfam" id="PF07650">
    <property type="entry name" value="KH_2"/>
    <property type="match status" value="1"/>
</dbReference>
<dbReference type="Pfam" id="PF00189">
    <property type="entry name" value="Ribosomal_S3_C"/>
    <property type="match status" value="1"/>
</dbReference>
<dbReference type="SMART" id="SM00322">
    <property type="entry name" value="KH"/>
    <property type="match status" value="1"/>
</dbReference>
<dbReference type="SUPFAM" id="SSF54814">
    <property type="entry name" value="Prokaryotic type KH domain (KH-domain type II)"/>
    <property type="match status" value="1"/>
</dbReference>
<dbReference type="SUPFAM" id="SSF54821">
    <property type="entry name" value="Ribosomal protein S3 C-terminal domain"/>
    <property type="match status" value="1"/>
</dbReference>
<dbReference type="PROSITE" id="PS50823">
    <property type="entry name" value="KH_TYPE_2"/>
    <property type="match status" value="1"/>
</dbReference>
<dbReference type="PROSITE" id="PS00548">
    <property type="entry name" value="RIBOSOMAL_S3"/>
    <property type="match status" value="1"/>
</dbReference>
<name>RS3_CHLPB</name>
<reference key="1">
    <citation type="submission" date="2008-06" db="EMBL/GenBank/DDBJ databases">
        <title>Complete sequence of Chlorobium phaeobacteroides BS1.</title>
        <authorList>
            <consortium name="US DOE Joint Genome Institute"/>
            <person name="Lucas S."/>
            <person name="Copeland A."/>
            <person name="Lapidus A."/>
            <person name="Glavina del Rio T."/>
            <person name="Dalin E."/>
            <person name="Tice H."/>
            <person name="Bruce D."/>
            <person name="Goodwin L."/>
            <person name="Pitluck S."/>
            <person name="Schmutz J."/>
            <person name="Larimer F."/>
            <person name="Land M."/>
            <person name="Hauser L."/>
            <person name="Kyrpides N."/>
            <person name="Ovchinnikova G."/>
            <person name="Li T."/>
            <person name="Liu Z."/>
            <person name="Zhao F."/>
            <person name="Overmann J."/>
            <person name="Bryant D.A."/>
            <person name="Richardson P."/>
        </authorList>
    </citation>
    <scope>NUCLEOTIDE SEQUENCE [LARGE SCALE GENOMIC DNA]</scope>
    <source>
        <strain>BS1</strain>
    </source>
</reference>